<organism>
    <name type="scientific">Oryza sativa subsp. japonica</name>
    <name type="common">Rice</name>
    <dbReference type="NCBI Taxonomy" id="39947"/>
    <lineage>
        <taxon>Eukaryota</taxon>
        <taxon>Viridiplantae</taxon>
        <taxon>Streptophyta</taxon>
        <taxon>Embryophyta</taxon>
        <taxon>Tracheophyta</taxon>
        <taxon>Spermatophyta</taxon>
        <taxon>Magnoliopsida</taxon>
        <taxon>Liliopsida</taxon>
        <taxon>Poales</taxon>
        <taxon>Poaceae</taxon>
        <taxon>BOP clade</taxon>
        <taxon>Oryzoideae</taxon>
        <taxon>Oryzeae</taxon>
        <taxon>Oryzinae</taxon>
        <taxon>Oryza</taxon>
        <taxon>Oryza sativa</taxon>
    </lineage>
</organism>
<dbReference type="EC" id="3.2.1.21" evidence="2"/>
<dbReference type="EMBL" id="AC137618">
    <property type="protein sequence ID" value="AAV31358.1"/>
    <property type="molecule type" value="Genomic_DNA"/>
</dbReference>
<dbReference type="EMBL" id="AP008211">
    <property type="protein sequence ID" value="BAF17245.1"/>
    <property type="molecule type" value="Genomic_DNA"/>
</dbReference>
<dbReference type="EMBL" id="AP014961">
    <property type="protein sequence ID" value="BAS93647.1"/>
    <property type="molecule type" value="Genomic_DNA"/>
</dbReference>
<dbReference type="EMBL" id="AK071469">
    <property type="protein sequence ID" value="BAG92509.1"/>
    <property type="molecule type" value="mRNA"/>
</dbReference>
<dbReference type="RefSeq" id="XP_015640028.1">
    <property type="nucleotide sequence ID" value="XM_015784542.1"/>
</dbReference>
<dbReference type="SMR" id="Q60DX8"/>
<dbReference type="FunCoup" id="Q60DX8">
    <property type="interactions" value="337"/>
</dbReference>
<dbReference type="STRING" id="39947.Q60DX8"/>
<dbReference type="CAZy" id="GH1">
    <property type="family name" value="Glycoside Hydrolase Family 1"/>
</dbReference>
<dbReference type="GlyCosmos" id="Q60DX8">
    <property type="glycosylation" value="4 sites, No reported glycans"/>
</dbReference>
<dbReference type="PaxDb" id="39947-Q60DX8"/>
<dbReference type="EnsemblPlants" id="Os05t0366600-01">
    <property type="protein sequence ID" value="Os05t0366600-01"/>
    <property type="gene ID" value="Os05g0366600"/>
</dbReference>
<dbReference type="Gramene" id="Os05t0366600-01">
    <property type="protein sequence ID" value="Os05t0366600-01"/>
    <property type="gene ID" value="Os05g0366600"/>
</dbReference>
<dbReference type="KEGG" id="dosa:Os05g0366600"/>
<dbReference type="eggNOG" id="KOG0626">
    <property type="taxonomic scope" value="Eukaryota"/>
</dbReference>
<dbReference type="HOGENOM" id="CLU_001859_1_0_1"/>
<dbReference type="InParanoid" id="Q60DX8"/>
<dbReference type="OMA" id="NWSWINS"/>
<dbReference type="OrthoDB" id="65569at2759"/>
<dbReference type="Proteomes" id="UP000000763">
    <property type="component" value="Chromosome 5"/>
</dbReference>
<dbReference type="Proteomes" id="UP000059680">
    <property type="component" value="Chromosome 5"/>
</dbReference>
<dbReference type="GO" id="GO:0033907">
    <property type="term" value="F:beta-D-fucosidase activity"/>
    <property type="evidence" value="ECO:0007669"/>
    <property type="project" value="UniProtKB-ARBA"/>
</dbReference>
<dbReference type="GO" id="GO:0004565">
    <property type="term" value="F:beta-galactosidase activity"/>
    <property type="evidence" value="ECO:0007669"/>
    <property type="project" value="UniProtKB-ARBA"/>
</dbReference>
<dbReference type="GO" id="GO:0008422">
    <property type="term" value="F:beta-glucosidase activity"/>
    <property type="evidence" value="ECO:0000318"/>
    <property type="project" value="GO_Central"/>
</dbReference>
<dbReference type="GO" id="GO:0005975">
    <property type="term" value="P:carbohydrate metabolic process"/>
    <property type="evidence" value="ECO:0007669"/>
    <property type="project" value="InterPro"/>
</dbReference>
<dbReference type="FunFam" id="3.20.20.80:FF:000069">
    <property type="entry name" value="Beta-glucosidase 1"/>
    <property type="match status" value="1"/>
</dbReference>
<dbReference type="Gene3D" id="3.20.20.80">
    <property type="entry name" value="Glycosidases"/>
    <property type="match status" value="1"/>
</dbReference>
<dbReference type="InterPro" id="IPR001360">
    <property type="entry name" value="Glyco_hydro_1"/>
</dbReference>
<dbReference type="InterPro" id="IPR033132">
    <property type="entry name" value="Glyco_hydro_1_N_CS"/>
</dbReference>
<dbReference type="InterPro" id="IPR017853">
    <property type="entry name" value="Glycoside_hydrolase_SF"/>
</dbReference>
<dbReference type="PANTHER" id="PTHR10353:SF29">
    <property type="entry name" value="BETA-GLUCOSIDASE 11"/>
    <property type="match status" value="1"/>
</dbReference>
<dbReference type="PANTHER" id="PTHR10353">
    <property type="entry name" value="GLYCOSYL HYDROLASE"/>
    <property type="match status" value="1"/>
</dbReference>
<dbReference type="Pfam" id="PF00232">
    <property type="entry name" value="Glyco_hydro_1"/>
    <property type="match status" value="1"/>
</dbReference>
<dbReference type="PRINTS" id="PR00131">
    <property type="entry name" value="GLHYDRLASE1"/>
</dbReference>
<dbReference type="SUPFAM" id="SSF51445">
    <property type="entry name" value="(Trans)glycosidases"/>
    <property type="match status" value="1"/>
</dbReference>
<dbReference type="PROSITE" id="PS00653">
    <property type="entry name" value="GLYCOSYL_HYDROL_F1_2"/>
    <property type="match status" value="1"/>
</dbReference>
<protein>
    <recommendedName>
        <fullName>Beta-glucosidase 22</fullName>
        <shortName>Os5bglu22</shortName>
        <ecNumber evidence="2">3.2.1.21</ecNumber>
    </recommendedName>
</protein>
<comment type="catalytic activity">
    <reaction evidence="2">
        <text>Hydrolysis of terminal, non-reducing beta-D-glucosyl residues with release of beta-D-glucose.</text>
        <dbReference type="EC" id="3.2.1.21"/>
    </reaction>
</comment>
<comment type="similarity">
    <text evidence="8">Belongs to the glycosyl hydrolase 1 family.</text>
</comment>
<evidence type="ECO:0000250" key="1">
    <source>
        <dbReference type="UniProtKB" id="Q1XH05"/>
    </source>
</evidence>
<evidence type="ECO:0000250" key="2">
    <source>
        <dbReference type="UniProtKB" id="Q75I94"/>
    </source>
</evidence>
<evidence type="ECO:0000250" key="3">
    <source>
        <dbReference type="UniProtKB" id="Q7XSK0"/>
    </source>
</evidence>
<evidence type="ECO:0000250" key="4">
    <source>
        <dbReference type="UniProtKB" id="Q8GU20"/>
    </source>
</evidence>
<evidence type="ECO:0000250" key="5">
    <source>
        <dbReference type="UniProtKB" id="Q9SPP9"/>
    </source>
</evidence>
<evidence type="ECO:0000255" key="6"/>
<evidence type="ECO:0000255" key="7">
    <source>
        <dbReference type="PROSITE-ProRule" id="PRU00498"/>
    </source>
</evidence>
<evidence type="ECO:0000305" key="8"/>
<name>BGL22_ORYSJ</name>
<gene>
    <name type="primary">BGLU22</name>
    <name type="ordered locus">Os05g0366600</name>
    <name type="ordered locus">LOC_Os05g30350</name>
    <name type="ORF">OSJNBa0090H02.10</name>
</gene>
<reference key="1">
    <citation type="journal article" date="2005" name="Mol. Genet. Genomics">
        <title>A fine physical map of the rice chromosome 5.</title>
        <authorList>
            <person name="Cheng C.-H."/>
            <person name="Chung M.C."/>
            <person name="Liu S.-M."/>
            <person name="Chen S.-K."/>
            <person name="Kao F.Y."/>
            <person name="Lin S.-J."/>
            <person name="Hsiao S.-H."/>
            <person name="Tseng I.C."/>
            <person name="Hsing Y.-I.C."/>
            <person name="Wu H.-P."/>
            <person name="Chen C.-S."/>
            <person name="Shaw J.-F."/>
            <person name="Wu J."/>
            <person name="Matsumoto T."/>
            <person name="Sasaki T."/>
            <person name="Chen H.-C."/>
            <person name="Chow T.-Y."/>
        </authorList>
    </citation>
    <scope>NUCLEOTIDE SEQUENCE [LARGE SCALE GENOMIC DNA]</scope>
    <source>
        <strain>cv. Nipponbare</strain>
    </source>
</reference>
<reference key="2">
    <citation type="journal article" date="2005" name="Nature">
        <title>The map-based sequence of the rice genome.</title>
        <authorList>
            <consortium name="International rice genome sequencing project (IRGSP)"/>
        </authorList>
    </citation>
    <scope>NUCLEOTIDE SEQUENCE [LARGE SCALE GENOMIC DNA]</scope>
    <source>
        <strain>cv. Nipponbare</strain>
    </source>
</reference>
<reference key="3">
    <citation type="journal article" date="2008" name="Nucleic Acids Res.">
        <title>The rice annotation project database (RAP-DB): 2008 update.</title>
        <authorList>
            <consortium name="The rice annotation project (RAP)"/>
        </authorList>
    </citation>
    <scope>GENOME REANNOTATION</scope>
    <source>
        <strain>cv. Nipponbare</strain>
    </source>
</reference>
<reference key="4">
    <citation type="journal article" date="2013" name="Rice">
        <title>Improvement of the Oryza sativa Nipponbare reference genome using next generation sequence and optical map data.</title>
        <authorList>
            <person name="Kawahara Y."/>
            <person name="de la Bastide M."/>
            <person name="Hamilton J.P."/>
            <person name="Kanamori H."/>
            <person name="McCombie W.R."/>
            <person name="Ouyang S."/>
            <person name="Schwartz D.C."/>
            <person name="Tanaka T."/>
            <person name="Wu J."/>
            <person name="Zhou S."/>
            <person name="Childs K.L."/>
            <person name="Davidson R.M."/>
            <person name="Lin H."/>
            <person name="Quesada-Ocampo L."/>
            <person name="Vaillancourt B."/>
            <person name="Sakai H."/>
            <person name="Lee S.S."/>
            <person name="Kim J."/>
            <person name="Numa H."/>
            <person name="Itoh T."/>
            <person name="Buell C.R."/>
            <person name="Matsumoto T."/>
        </authorList>
    </citation>
    <scope>GENOME REANNOTATION</scope>
    <source>
        <strain>cv. Nipponbare</strain>
    </source>
</reference>
<reference key="5">
    <citation type="journal article" date="2003" name="Science">
        <title>Collection, mapping, and annotation of over 28,000 cDNA clones from japonica rice.</title>
        <authorList>
            <consortium name="The rice full-length cDNA consortium"/>
        </authorList>
    </citation>
    <scope>NUCLEOTIDE SEQUENCE [LARGE SCALE MRNA]</scope>
    <source>
        <strain>cv. Nipponbare</strain>
    </source>
</reference>
<reference key="6">
    <citation type="journal article" date="2006" name="BMC Plant Biol.">
        <title>Analysis of rice glycosyl hydrolase family 1 and expression of Os4bglu12 beta-glucosidase.</title>
        <authorList>
            <person name="Opassiri R."/>
            <person name="Pomthong B."/>
            <person name="Onkoksoong T."/>
            <person name="Akiyama T."/>
            <person name="Esen A."/>
            <person name="Ketudat Cairns J.R."/>
        </authorList>
    </citation>
    <scope>GENE FAMILY</scope>
    <scope>NOMENCLATURE</scope>
</reference>
<accession>Q60DX8</accession>
<accession>A0A0P0WLG6</accession>
<feature type="signal peptide" evidence="6">
    <location>
        <begin position="1"/>
        <end position="24"/>
    </location>
</feature>
<feature type="chain" id="PRO_0000390339" description="Beta-glucosidase 22">
    <location>
        <begin position="25"/>
        <end position="533"/>
    </location>
</feature>
<feature type="active site" description="Proton donor" evidence="3">
    <location>
        <position position="207"/>
    </location>
</feature>
<feature type="active site" description="Nucleophile" evidence="3">
    <location>
        <position position="421"/>
    </location>
</feature>
<feature type="binding site" evidence="3">
    <location>
        <position position="61"/>
    </location>
    <ligand>
        <name>a beta-D-glucoside</name>
        <dbReference type="ChEBI" id="CHEBI:22798"/>
    </ligand>
</feature>
<feature type="binding site" evidence="3">
    <location>
        <position position="161"/>
    </location>
    <ligand>
        <name>a beta-D-glucoside</name>
        <dbReference type="ChEBI" id="CHEBI:22798"/>
    </ligand>
</feature>
<feature type="binding site" evidence="4">
    <location>
        <begin position="206"/>
        <end position="207"/>
    </location>
    <ligand>
        <name>a beta-D-glucoside</name>
        <dbReference type="ChEBI" id="CHEBI:22798"/>
    </ligand>
</feature>
<feature type="binding site" evidence="3">
    <location>
        <position position="350"/>
    </location>
    <ligand>
        <name>a beta-D-glucoside</name>
        <dbReference type="ChEBI" id="CHEBI:22798"/>
    </ligand>
</feature>
<feature type="binding site" evidence="5">
    <location>
        <position position="421"/>
    </location>
    <ligand>
        <name>a beta-D-glucoside</name>
        <dbReference type="ChEBI" id="CHEBI:22798"/>
    </ligand>
</feature>
<feature type="binding site" evidence="3">
    <location>
        <position position="466"/>
    </location>
    <ligand>
        <name>a beta-D-glucoside</name>
        <dbReference type="ChEBI" id="CHEBI:22798"/>
    </ligand>
</feature>
<feature type="binding site" evidence="1">
    <location>
        <position position="482"/>
    </location>
    <ligand>
        <name>a beta-D-glucoside</name>
        <dbReference type="ChEBI" id="CHEBI:22798"/>
    </ligand>
</feature>
<feature type="glycosylation site" description="N-linked (GlcNAc...) asparagine" evidence="7">
    <location>
        <position position="41"/>
    </location>
</feature>
<feature type="glycosylation site" description="N-linked (GlcNAc...) asparagine" evidence="7">
    <location>
        <position position="233"/>
    </location>
</feature>
<feature type="glycosylation site" description="N-linked (GlcNAc...) asparagine" evidence="7">
    <location>
        <position position="238"/>
    </location>
</feature>
<feature type="glycosylation site" description="N-linked (GlcNAc...) asparagine" evidence="7">
    <location>
        <position position="435"/>
    </location>
</feature>
<feature type="disulfide bond" evidence="3">
    <location>
        <begin position="226"/>
        <end position="234"/>
    </location>
</feature>
<keyword id="KW-1015">Disulfide bond</keyword>
<keyword id="KW-0325">Glycoprotein</keyword>
<keyword id="KW-0326">Glycosidase</keyword>
<keyword id="KW-0378">Hydrolase</keyword>
<keyword id="KW-1185">Reference proteome</keyword>
<keyword id="KW-0732">Signal</keyword>
<sequence>MAVSSSTSTCSSFSLLLLLLLLAAAPWRSGEAAAAAARALNFTRQDFPGEFVFGAGTSAYQYEGATDEDGRSPSIWDTFTHAGKMPDKSTGDMGAGGYHKYKEDVKLMSDTSLEAYRFSISWSRLIPRGRGPVNPKGLEYYNSLIDELVERGIEIHVTLYHLDFPQILEDEYHGWLSPRVIDDFTAYADVCFREFGDRVRHWTTMDEPNVLSIAAYDSGAFPPCRCSPPFGANCTAGNSTVEPYVVAHNSILAHASVTRLYRDKYQATQEGFVGMNIYSFWNYPFSSSSADIAATQRALDFMVGWILDPLVYGDYPEIMKKKAGSRIPSFTEEQSELIRGSADFIGINHYTSVYISDASNGETVGPRDYSADMAATFRISRNDTPSGQFVPTRLPRDPKGLQCMLEYLRDTYQGIPVYIQENGFGHFGKDDDSLNDTDRVDYLSSYMGSTLAALRNGANVKGYFVWSFLDVFELLAGYHSPFGLHYVDFEDPNLPRQPKLSAHWYSKFLRGEIGINIESTISPDEHEHEHADQ</sequence>
<proteinExistence type="evidence at transcript level"/>